<name>AMPP1_PYRTT</name>
<proteinExistence type="inferred from homology"/>
<dbReference type="EC" id="3.4.11.9"/>
<dbReference type="EMBL" id="GL537558">
    <property type="protein sequence ID" value="EFQ86051.1"/>
    <property type="molecule type" value="Genomic_DNA"/>
</dbReference>
<dbReference type="RefSeq" id="XP_003305864.1">
    <property type="nucleotide sequence ID" value="XM_003305816.1"/>
</dbReference>
<dbReference type="SMR" id="E3S7K9"/>
<dbReference type="STRING" id="861557.E3S7K9"/>
<dbReference type="EnsemblFungi" id="EFQ86051">
    <property type="protein sequence ID" value="EFQ86051"/>
    <property type="gene ID" value="PTT_18815"/>
</dbReference>
<dbReference type="KEGG" id="pte:PTT_18815"/>
<dbReference type="eggNOG" id="KOG2413">
    <property type="taxonomic scope" value="Eukaryota"/>
</dbReference>
<dbReference type="HOGENOM" id="CLU_011781_2_3_1"/>
<dbReference type="OrthoDB" id="9995434at2759"/>
<dbReference type="Proteomes" id="UP000001067">
    <property type="component" value="Unassembled WGS sequence"/>
</dbReference>
<dbReference type="GO" id="GO:0005737">
    <property type="term" value="C:cytoplasm"/>
    <property type="evidence" value="ECO:0007669"/>
    <property type="project" value="UniProtKB-ARBA"/>
</dbReference>
<dbReference type="GO" id="GO:0046872">
    <property type="term" value="F:metal ion binding"/>
    <property type="evidence" value="ECO:0007669"/>
    <property type="project" value="UniProtKB-KW"/>
</dbReference>
<dbReference type="GO" id="GO:0070006">
    <property type="term" value="F:metalloaminopeptidase activity"/>
    <property type="evidence" value="ECO:0007669"/>
    <property type="project" value="InterPro"/>
</dbReference>
<dbReference type="GO" id="GO:0006508">
    <property type="term" value="P:proteolysis"/>
    <property type="evidence" value="ECO:0007669"/>
    <property type="project" value="UniProtKB-KW"/>
</dbReference>
<dbReference type="CDD" id="cd01085">
    <property type="entry name" value="APP"/>
    <property type="match status" value="1"/>
</dbReference>
<dbReference type="FunFam" id="3.40.350.10:FF:000010">
    <property type="entry name" value="Probable Xaa-Pro aminopeptidase P"/>
    <property type="match status" value="1"/>
</dbReference>
<dbReference type="FunFam" id="3.90.230.10:FF:000007">
    <property type="entry name" value="Xaa-Pro aminopeptidase P"/>
    <property type="match status" value="1"/>
</dbReference>
<dbReference type="FunFam" id="3.40.350.10:FF:000003">
    <property type="entry name" value="Xaa-pro aminopeptidase P"/>
    <property type="match status" value="1"/>
</dbReference>
<dbReference type="Gene3D" id="3.90.230.10">
    <property type="entry name" value="Creatinase/methionine aminopeptidase superfamily"/>
    <property type="match status" value="1"/>
</dbReference>
<dbReference type="Gene3D" id="3.40.350.10">
    <property type="entry name" value="Creatinase/prolidase N-terminal domain"/>
    <property type="match status" value="2"/>
</dbReference>
<dbReference type="InterPro" id="IPR029149">
    <property type="entry name" value="Creatin/AminoP/Spt16_N"/>
</dbReference>
<dbReference type="InterPro" id="IPR036005">
    <property type="entry name" value="Creatinase/aminopeptidase-like"/>
</dbReference>
<dbReference type="InterPro" id="IPR000587">
    <property type="entry name" value="Creatinase_N"/>
</dbReference>
<dbReference type="InterPro" id="IPR000994">
    <property type="entry name" value="Pept_M24"/>
</dbReference>
<dbReference type="InterPro" id="IPR033740">
    <property type="entry name" value="Pept_M24B"/>
</dbReference>
<dbReference type="InterPro" id="IPR032416">
    <property type="entry name" value="Peptidase_M24_C"/>
</dbReference>
<dbReference type="InterPro" id="IPR001131">
    <property type="entry name" value="Peptidase_M24B_aminopep-P_CS"/>
</dbReference>
<dbReference type="InterPro" id="IPR050422">
    <property type="entry name" value="X-Pro_aminopeptidase_P"/>
</dbReference>
<dbReference type="PANTHER" id="PTHR43763">
    <property type="entry name" value="XAA-PRO AMINOPEPTIDASE 1"/>
    <property type="match status" value="1"/>
</dbReference>
<dbReference type="PANTHER" id="PTHR43763:SF6">
    <property type="entry name" value="XAA-PRO AMINOPEPTIDASE 1"/>
    <property type="match status" value="1"/>
</dbReference>
<dbReference type="Pfam" id="PF01321">
    <property type="entry name" value="Creatinase_N"/>
    <property type="match status" value="1"/>
</dbReference>
<dbReference type="Pfam" id="PF16189">
    <property type="entry name" value="Creatinase_N_2"/>
    <property type="match status" value="1"/>
</dbReference>
<dbReference type="Pfam" id="PF00557">
    <property type="entry name" value="Peptidase_M24"/>
    <property type="match status" value="1"/>
</dbReference>
<dbReference type="Pfam" id="PF16188">
    <property type="entry name" value="Peptidase_M24_C"/>
    <property type="match status" value="1"/>
</dbReference>
<dbReference type="SUPFAM" id="SSF55920">
    <property type="entry name" value="Creatinase/aminopeptidase"/>
    <property type="match status" value="1"/>
</dbReference>
<dbReference type="SUPFAM" id="SSF53092">
    <property type="entry name" value="Creatinase/prolidase N-terminal domain"/>
    <property type="match status" value="1"/>
</dbReference>
<dbReference type="PROSITE" id="PS00491">
    <property type="entry name" value="PROLINE_PEPTIDASE"/>
    <property type="match status" value="1"/>
</dbReference>
<gene>
    <name type="primary">ampp</name>
    <name type="ORF">PTT_18815</name>
</gene>
<accession>E3S7K9</accession>
<keyword id="KW-0031">Aminopeptidase</keyword>
<keyword id="KW-0378">Hydrolase</keyword>
<keyword id="KW-0464">Manganese</keyword>
<keyword id="KW-0479">Metal-binding</keyword>
<keyword id="KW-0482">Metalloprotease</keyword>
<keyword id="KW-0645">Protease</keyword>
<keyword id="KW-1185">Reference proteome</keyword>
<reference key="1">
    <citation type="journal article" date="2010" name="Genome Biol.">
        <title>A first genome assembly of the barley fungal pathogen Pyrenophora teres f. teres.</title>
        <authorList>
            <person name="Ellwood S.R."/>
            <person name="Liu Z."/>
            <person name="Syme R.A."/>
            <person name="Lai Z."/>
            <person name="Hane J.K."/>
            <person name="Keiper F."/>
            <person name="Moffat C.S."/>
            <person name="Oliver R.P."/>
            <person name="Friesen T.L."/>
        </authorList>
    </citation>
    <scope>NUCLEOTIDE SEQUENCE [LARGE SCALE GENOMIC DNA]</scope>
    <source>
        <strain>0-1</strain>
    </source>
</reference>
<organism>
    <name type="scientific">Pyrenophora teres f. teres (strain 0-1)</name>
    <name type="common">Barley net blotch fungus</name>
    <name type="synonym">Drechslera teres f. teres</name>
    <dbReference type="NCBI Taxonomy" id="861557"/>
    <lineage>
        <taxon>Eukaryota</taxon>
        <taxon>Fungi</taxon>
        <taxon>Dikarya</taxon>
        <taxon>Ascomycota</taxon>
        <taxon>Pezizomycotina</taxon>
        <taxon>Dothideomycetes</taxon>
        <taxon>Pleosporomycetidae</taxon>
        <taxon>Pleosporales</taxon>
        <taxon>Pleosporineae</taxon>
        <taxon>Pleosporaceae</taxon>
        <taxon>Pyrenophora</taxon>
    </lineage>
</organism>
<feature type="chain" id="PRO_0000411808" description="Probable Xaa-Pro aminopeptidase P">
    <location>
        <begin position="1"/>
        <end position="656"/>
    </location>
</feature>
<feature type="binding site" evidence="1">
    <location>
        <position position="453"/>
    </location>
    <ligand>
        <name>Mn(2+)</name>
        <dbReference type="ChEBI" id="CHEBI:29035"/>
        <label>2</label>
    </ligand>
</feature>
<feature type="binding site" evidence="1">
    <location>
        <position position="464"/>
    </location>
    <ligand>
        <name>Mn(2+)</name>
        <dbReference type="ChEBI" id="CHEBI:29035"/>
        <label>1</label>
    </ligand>
</feature>
<feature type="binding site" evidence="1">
    <location>
        <position position="464"/>
    </location>
    <ligand>
        <name>Mn(2+)</name>
        <dbReference type="ChEBI" id="CHEBI:29035"/>
        <label>2</label>
    </ligand>
</feature>
<feature type="binding site" evidence="1">
    <location>
        <position position="562"/>
    </location>
    <ligand>
        <name>Mn(2+)</name>
        <dbReference type="ChEBI" id="CHEBI:29035"/>
        <label>1</label>
    </ligand>
</feature>
<feature type="binding site" evidence="1">
    <location>
        <position position="576"/>
    </location>
    <ligand>
        <name>Mn(2+)</name>
        <dbReference type="ChEBI" id="CHEBI:29035"/>
        <label>1</label>
    </ligand>
</feature>
<feature type="binding site" evidence="1">
    <location>
        <position position="576"/>
    </location>
    <ligand>
        <name>Mn(2+)</name>
        <dbReference type="ChEBI" id="CHEBI:29035"/>
        <label>2</label>
    </ligand>
</feature>
<evidence type="ECO:0000250" key="1"/>
<evidence type="ECO:0000305" key="2"/>
<sequence length="656" mass="73488">MLLPRIPQLSHATRAAYVAAKSPFSPVPVRPFHASAALRAIDMAKVDTTHRLAELRKLMKERNVDIYMVPSEDSHQSEYIAPCDARRAYISGFTGSAGYAVITHEKAALSTDGRYFNQAEKQLDSNWELLKQGIQDVPTIQQWTADQAGGGKVVGVDPSVVTAGDARKLAEKIKKKGGEYKAIDENLVDLVWGSERPARPSEKVIVQPKKYAGKGFEDKIDDLRKELEKKKSLGFVVSMLDEVAWLFNLRGSDIPYNPVFFSYAVVTPTTATLYVDENKLPEDVKEHLGDKITIRPYEAIFGDVTALSKELFEANDKNETQKKFLTSNTASWALNKALGGDDKVEETRSPVGDSKAVKNEVELEGMRQCHIRDGAALSEYFAWLEDQLINKKATLDEVDGADKLEEIRKKHDMFMGLSFDTISSTGANAAVIHYKPEKGECATIDSKAIYLCDSGAQYRDGTTDTTRTLHFTEPTEMERKAYTLVLKGNMALERVKFPKGTTGFALDALARQFLWAEGLDYRHGTGHGVGSFLNVHEGPIGIGTRVQYSEVSLAVGNVVSDEPGYYEDGKFGIRIENMVMVKEVETKHKFGDKPYLGFEHVTMTPYCRNLVDMKLLTEDEKKFINDYHKEVYEKTSKYFDKDALTLEWLKRETAPY</sequence>
<protein>
    <recommendedName>
        <fullName>Probable Xaa-Pro aminopeptidase P</fullName>
        <shortName>AMPP</shortName>
        <shortName>Aminopeptidase P</shortName>
        <ecNumber>3.4.11.9</ecNumber>
    </recommendedName>
    <alternativeName>
        <fullName>Aminoacylproline aminopeptidase</fullName>
    </alternativeName>
    <alternativeName>
        <fullName>Prolidase</fullName>
    </alternativeName>
</protein>
<comment type="function">
    <text evidence="1">Catalyzes the removal of a penultimate prolyl residue from the N-termini of peptides.</text>
</comment>
<comment type="catalytic activity">
    <reaction>
        <text>Release of any N-terminal amino acid, including proline, that is linked to proline, even from a dipeptide or tripeptide.</text>
        <dbReference type="EC" id="3.4.11.9"/>
    </reaction>
</comment>
<comment type="cofactor">
    <cofactor evidence="1">
        <name>Mn(2+)</name>
        <dbReference type="ChEBI" id="CHEBI:29035"/>
    </cofactor>
    <text evidence="1">Binds 2 manganese ions per subunit.</text>
</comment>
<comment type="similarity">
    <text evidence="2">Belongs to the peptidase M24B family.</text>
</comment>